<reference key="1">
    <citation type="submission" date="2007-03" db="EMBL/GenBank/DDBJ databases">
        <title>Complete sequence of chromosome of Methanococcus maripaludis C5.</title>
        <authorList>
            <consortium name="US DOE Joint Genome Institute"/>
            <person name="Copeland A."/>
            <person name="Lucas S."/>
            <person name="Lapidus A."/>
            <person name="Barry K."/>
            <person name="Glavina del Rio T."/>
            <person name="Dalin E."/>
            <person name="Tice H."/>
            <person name="Pitluck S."/>
            <person name="Chertkov O."/>
            <person name="Brettin T."/>
            <person name="Bruce D."/>
            <person name="Han C."/>
            <person name="Detter J.C."/>
            <person name="Schmutz J."/>
            <person name="Larimer F."/>
            <person name="Land M."/>
            <person name="Hauser L."/>
            <person name="Kyrpides N."/>
            <person name="Mikhailova N."/>
            <person name="Sieprawska-Lupa M."/>
            <person name="Whitman W.B."/>
            <person name="Richardson P."/>
        </authorList>
    </citation>
    <scope>NUCLEOTIDE SEQUENCE [LARGE SCALE GENOMIC DNA]</scope>
    <source>
        <strain>C5 / ATCC BAA-1333</strain>
    </source>
</reference>
<evidence type="ECO:0000255" key="1">
    <source>
        <dbReference type="HAMAP-Rule" id="MF_00243"/>
    </source>
</evidence>
<organism>
    <name type="scientific">Methanococcus maripaludis (strain C5 / ATCC BAA-1333)</name>
    <dbReference type="NCBI Taxonomy" id="402880"/>
    <lineage>
        <taxon>Archaea</taxon>
        <taxon>Methanobacteriati</taxon>
        <taxon>Methanobacteriota</taxon>
        <taxon>Methanomada group</taxon>
        <taxon>Methanococci</taxon>
        <taxon>Methanococcales</taxon>
        <taxon>Methanococcaceae</taxon>
        <taxon>Methanococcus</taxon>
    </lineage>
</organism>
<feature type="chain" id="PRO_1000005737" description="Nicotinamide-nucleotide adenylyltransferase">
    <location>
        <begin position="1"/>
        <end position="171"/>
    </location>
</feature>
<dbReference type="EC" id="2.7.7.1" evidence="1"/>
<dbReference type="EMBL" id="CP000609">
    <property type="protein sequence ID" value="ABO36128.1"/>
    <property type="molecule type" value="Genomic_DNA"/>
</dbReference>
<dbReference type="RefSeq" id="WP_011869573.1">
    <property type="nucleotide sequence ID" value="NC_009135.1"/>
</dbReference>
<dbReference type="SMR" id="A4G0Z4"/>
<dbReference type="STRING" id="402880.MmarC5_1831"/>
<dbReference type="GeneID" id="4927743"/>
<dbReference type="KEGG" id="mmq:MmarC5_1831"/>
<dbReference type="eggNOG" id="arCOG00972">
    <property type="taxonomic scope" value="Archaea"/>
</dbReference>
<dbReference type="HOGENOM" id="CLU_108783_0_0_2"/>
<dbReference type="OrthoDB" id="264480at2157"/>
<dbReference type="UniPathway" id="UPA00253">
    <property type="reaction ID" value="UER00600"/>
</dbReference>
<dbReference type="Proteomes" id="UP000000253">
    <property type="component" value="Chromosome"/>
</dbReference>
<dbReference type="GO" id="GO:0005737">
    <property type="term" value="C:cytoplasm"/>
    <property type="evidence" value="ECO:0007669"/>
    <property type="project" value="UniProtKB-SubCell"/>
</dbReference>
<dbReference type="GO" id="GO:0005524">
    <property type="term" value="F:ATP binding"/>
    <property type="evidence" value="ECO:0007669"/>
    <property type="project" value="UniProtKB-KW"/>
</dbReference>
<dbReference type="GO" id="GO:0000309">
    <property type="term" value="F:nicotinamide-nucleotide adenylyltransferase activity"/>
    <property type="evidence" value="ECO:0007669"/>
    <property type="project" value="UniProtKB-UniRule"/>
</dbReference>
<dbReference type="GO" id="GO:0009435">
    <property type="term" value="P:NAD biosynthetic process"/>
    <property type="evidence" value="ECO:0007669"/>
    <property type="project" value="UniProtKB-UniRule"/>
</dbReference>
<dbReference type="CDD" id="cd02166">
    <property type="entry name" value="NMNAT_Archaea"/>
    <property type="match status" value="1"/>
</dbReference>
<dbReference type="Gene3D" id="3.40.50.620">
    <property type="entry name" value="HUPs"/>
    <property type="match status" value="1"/>
</dbReference>
<dbReference type="HAMAP" id="MF_00243">
    <property type="entry name" value="NMN_adenylyltr"/>
    <property type="match status" value="1"/>
</dbReference>
<dbReference type="InterPro" id="IPR004821">
    <property type="entry name" value="Cyt_trans-like"/>
</dbReference>
<dbReference type="InterPro" id="IPR006418">
    <property type="entry name" value="NMN_Atrans_arc"/>
</dbReference>
<dbReference type="InterPro" id="IPR014729">
    <property type="entry name" value="Rossmann-like_a/b/a_fold"/>
</dbReference>
<dbReference type="NCBIfam" id="TIGR01527">
    <property type="entry name" value="arch_NMN_Atrans"/>
    <property type="match status" value="1"/>
</dbReference>
<dbReference type="NCBIfam" id="TIGR00125">
    <property type="entry name" value="cyt_tran_rel"/>
    <property type="match status" value="1"/>
</dbReference>
<dbReference type="NCBIfam" id="NF002243">
    <property type="entry name" value="PRK01153.1"/>
    <property type="match status" value="1"/>
</dbReference>
<dbReference type="PANTHER" id="PTHR21342:SF0">
    <property type="entry name" value="BIFUNCTIONAL NMN ADENYLYLTRANSFERASE_NUDIX HYDROLASE"/>
    <property type="match status" value="1"/>
</dbReference>
<dbReference type="PANTHER" id="PTHR21342">
    <property type="entry name" value="PHOSPHOPANTETHEINE ADENYLYLTRANSFERASE"/>
    <property type="match status" value="1"/>
</dbReference>
<dbReference type="Pfam" id="PF01467">
    <property type="entry name" value="CTP_transf_like"/>
    <property type="match status" value="1"/>
</dbReference>
<dbReference type="SUPFAM" id="SSF52374">
    <property type="entry name" value="Nucleotidylyl transferase"/>
    <property type="match status" value="1"/>
</dbReference>
<accession>A4G0Z4</accession>
<protein>
    <recommendedName>
        <fullName evidence="1">Nicotinamide-nucleotide adenylyltransferase</fullName>
        <ecNumber evidence="1">2.7.7.1</ecNumber>
    </recommendedName>
    <alternativeName>
        <fullName evidence="1">NAD(+) diphosphorylase</fullName>
    </alternativeName>
    <alternativeName>
        <fullName evidence="1">NAD(+) pyrophosphorylase</fullName>
    </alternativeName>
    <alternativeName>
        <fullName evidence="1">NMN adenylyltransferase</fullName>
    </alternativeName>
</protein>
<comment type="catalytic activity">
    <reaction evidence="1">
        <text>beta-nicotinamide D-ribonucleotide + ATP + H(+) = diphosphate + NAD(+)</text>
        <dbReference type="Rhea" id="RHEA:21360"/>
        <dbReference type="ChEBI" id="CHEBI:14649"/>
        <dbReference type="ChEBI" id="CHEBI:15378"/>
        <dbReference type="ChEBI" id="CHEBI:30616"/>
        <dbReference type="ChEBI" id="CHEBI:33019"/>
        <dbReference type="ChEBI" id="CHEBI:57540"/>
        <dbReference type="EC" id="2.7.7.1"/>
    </reaction>
</comment>
<comment type="pathway">
    <text evidence="1">Cofactor biosynthesis; NAD(+) biosynthesis; NAD(+) from nicotinamide D-ribonucleotide: step 1/1.</text>
</comment>
<comment type="subcellular location">
    <subcellularLocation>
        <location evidence="1">Cytoplasm</location>
    </subcellularLocation>
</comment>
<comment type="similarity">
    <text evidence="1">Belongs to the archaeal NMN adenylyltransferase family.</text>
</comment>
<sequence length="171" mass="19923">MRAFLIGRWQPFHKGHLEIIKKISKEVDEIIIGIGSCQKSHTLTDPFTAGERMMMITKTLENYDINYYAIPINDIDYNAVWVSSVESLTPPFTTVYTGNSLVRELFSEKNYAVKKPELYNRTDYSGTKIRKKMLDGSTWEHLVPEEVVKVIEEIDGINRIRRLNEKDYDEE</sequence>
<name>NADM_METM5</name>
<gene>
    <name type="ordered locus">MmarC5_1831</name>
</gene>
<keyword id="KW-0067">ATP-binding</keyword>
<keyword id="KW-0963">Cytoplasm</keyword>
<keyword id="KW-0520">NAD</keyword>
<keyword id="KW-0547">Nucleotide-binding</keyword>
<keyword id="KW-0548">Nucleotidyltransferase</keyword>
<keyword id="KW-0662">Pyridine nucleotide biosynthesis</keyword>
<keyword id="KW-0808">Transferase</keyword>
<proteinExistence type="inferred from homology"/>